<feature type="signal peptide" evidence="1">
    <location>
        <begin position="1"/>
        <end position="18"/>
    </location>
</feature>
<feature type="chain" id="PRO_0000446796" description="U-scoloptoxin(15)-Sa3a" evidence="3">
    <location>
        <begin position="19"/>
        <end position="90"/>
    </location>
</feature>
<keyword id="KW-1015">Disulfide bond</keyword>
<keyword id="KW-0964">Secreted</keyword>
<keyword id="KW-0732">Signal</keyword>
<keyword id="KW-0800">Toxin</keyword>
<accession>P0DQC3</accession>
<name>TXF3A_SCOAL</name>
<dbReference type="GO" id="GO:0005576">
    <property type="term" value="C:extracellular region"/>
    <property type="evidence" value="ECO:0007669"/>
    <property type="project" value="UniProtKB-SubCell"/>
</dbReference>
<dbReference type="GO" id="GO:0090729">
    <property type="term" value="F:toxin activity"/>
    <property type="evidence" value="ECO:0007669"/>
    <property type="project" value="UniProtKB-KW"/>
</dbReference>
<comment type="subcellular location">
    <subcellularLocation>
        <location evidence="4">Secreted</location>
    </subcellularLocation>
</comment>
<comment type="tissue specificity">
    <text evidence="4">Expressed by the venom gland.</text>
</comment>
<comment type="PTM">
    <text evidence="3">Contains 3 disulfide bonds.</text>
</comment>
<comment type="similarity">
    <text evidence="3">Belongs to the scoloptoxin-15 family.</text>
</comment>
<comment type="online information" name="National Center for Biotechnology Information (NCBI)">
    <link uri="https://www.ncbi.nlm.nih.gov/nuccore/GASK01000044"/>
</comment>
<evidence type="ECO:0000255" key="1"/>
<evidence type="ECO:0000303" key="2">
    <source>
    </source>
</evidence>
<evidence type="ECO:0000305" key="3"/>
<evidence type="ECO:0000305" key="4">
    <source>
    </source>
</evidence>
<proteinExistence type="inferred from homology"/>
<reference key="1">
    <citation type="journal article" date="2014" name="Mol. Biol. Evol.">
        <title>Clawing through evolution: toxin diversification and convergence in the ancient lineage Chilopoda (centipedes).</title>
        <authorList>
            <person name="Undheim E.A."/>
            <person name="Jones A."/>
            <person name="Clauser K.R."/>
            <person name="Holland J.W."/>
            <person name="Pineda S.S."/>
            <person name="King G.F."/>
            <person name="Fry B.G."/>
        </authorList>
    </citation>
    <scope>NUCLEOTIDE SEQUENCE [MRNA]</scope>
    <scope>NOMENCLATURE</scope>
    <source>
        <tissue>Venom gland</tissue>
    </source>
</reference>
<organism>
    <name type="scientific">Scolopendra alternans</name>
    <name type="common">Florida Keys giant centipede</name>
    <dbReference type="NCBI Taxonomy" id="1329349"/>
    <lineage>
        <taxon>Eukaryota</taxon>
        <taxon>Metazoa</taxon>
        <taxon>Ecdysozoa</taxon>
        <taxon>Arthropoda</taxon>
        <taxon>Myriapoda</taxon>
        <taxon>Chilopoda</taxon>
        <taxon>Pleurostigmophora</taxon>
        <taxon>Scolopendromorpha</taxon>
        <taxon>Scolopendridae</taxon>
        <taxon>Scolopendra</taxon>
    </lineage>
</organism>
<protein>
    <recommendedName>
        <fullName evidence="2">U-scoloptoxin(15)-Sa3a</fullName>
        <shortName evidence="2">U-SLPTX(15)-Sa3a</shortName>
    </recommendedName>
</protein>
<sequence>MKMVYLGLFLIITSCVISSGNLIYECRWVDTIRVKDPTNELCQKKCEETFTGRITVKHGYASSERRCACYGEKVLETPYPSDGVKDCNRI</sequence>